<name>RS17_GEOKA</name>
<protein>
    <recommendedName>
        <fullName evidence="1">Small ribosomal subunit protein uS17</fullName>
    </recommendedName>
    <alternativeName>
        <fullName evidence="2">30S ribosomal protein S17</fullName>
    </alternativeName>
</protein>
<sequence length="87" mass="10188">MSQRNQRKVYVGRVVSDKMDKTITVLVETYKKHPLYGKRVKYSKKYKAHDEHNIAKVGDIVKIMETRPLSATKRFRLVEVIEKAVVL</sequence>
<comment type="function">
    <text evidence="1">One of the primary rRNA binding proteins, it binds specifically to the 5'-end of 16S ribosomal RNA.</text>
</comment>
<comment type="subunit">
    <text evidence="1">Part of the 30S ribosomal subunit.</text>
</comment>
<comment type="similarity">
    <text evidence="1">Belongs to the universal ribosomal protein uS17 family.</text>
</comment>
<keyword id="KW-1185">Reference proteome</keyword>
<keyword id="KW-0687">Ribonucleoprotein</keyword>
<keyword id="KW-0689">Ribosomal protein</keyword>
<keyword id="KW-0694">RNA-binding</keyword>
<keyword id="KW-0699">rRNA-binding</keyword>
<accession>Q5L414</accession>
<reference key="1">
    <citation type="journal article" date="2004" name="Nucleic Acids Res.">
        <title>Thermoadaptation trait revealed by the genome sequence of thermophilic Geobacillus kaustophilus.</title>
        <authorList>
            <person name="Takami H."/>
            <person name="Takaki Y."/>
            <person name="Chee G.-J."/>
            <person name="Nishi S."/>
            <person name="Shimamura S."/>
            <person name="Suzuki H."/>
            <person name="Matsui S."/>
            <person name="Uchiyama I."/>
        </authorList>
    </citation>
    <scope>NUCLEOTIDE SEQUENCE [LARGE SCALE GENOMIC DNA]</scope>
    <source>
        <strain>HTA426</strain>
    </source>
</reference>
<dbReference type="EMBL" id="BA000043">
    <property type="protein sequence ID" value="BAD74400.1"/>
    <property type="molecule type" value="Genomic_DNA"/>
</dbReference>
<dbReference type="RefSeq" id="WP_011229629.1">
    <property type="nucleotide sequence ID" value="NC_006510.1"/>
</dbReference>
<dbReference type="SMR" id="Q5L414"/>
<dbReference type="STRING" id="235909.GK0115"/>
<dbReference type="GeneID" id="32062103"/>
<dbReference type="KEGG" id="gka:GK0115"/>
<dbReference type="eggNOG" id="COG0186">
    <property type="taxonomic scope" value="Bacteria"/>
</dbReference>
<dbReference type="HOGENOM" id="CLU_073626_1_0_9"/>
<dbReference type="Proteomes" id="UP000001172">
    <property type="component" value="Chromosome"/>
</dbReference>
<dbReference type="GO" id="GO:0022627">
    <property type="term" value="C:cytosolic small ribosomal subunit"/>
    <property type="evidence" value="ECO:0007669"/>
    <property type="project" value="TreeGrafter"/>
</dbReference>
<dbReference type="GO" id="GO:0019843">
    <property type="term" value="F:rRNA binding"/>
    <property type="evidence" value="ECO:0007669"/>
    <property type="project" value="UniProtKB-UniRule"/>
</dbReference>
<dbReference type="GO" id="GO:0003735">
    <property type="term" value="F:structural constituent of ribosome"/>
    <property type="evidence" value="ECO:0007669"/>
    <property type="project" value="InterPro"/>
</dbReference>
<dbReference type="GO" id="GO:0006412">
    <property type="term" value="P:translation"/>
    <property type="evidence" value="ECO:0007669"/>
    <property type="project" value="UniProtKB-UniRule"/>
</dbReference>
<dbReference type="CDD" id="cd00364">
    <property type="entry name" value="Ribosomal_uS17"/>
    <property type="match status" value="1"/>
</dbReference>
<dbReference type="FunFam" id="2.40.50.140:FF:000026">
    <property type="entry name" value="30S ribosomal protein S17"/>
    <property type="match status" value="1"/>
</dbReference>
<dbReference type="Gene3D" id="2.40.50.140">
    <property type="entry name" value="Nucleic acid-binding proteins"/>
    <property type="match status" value="1"/>
</dbReference>
<dbReference type="HAMAP" id="MF_01345_B">
    <property type="entry name" value="Ribosomal_uS17_B"/>
    <property type="match status" value="1"/>
</dbReference>
<dbReference type="InterPro" id="IPR012340">
    <property type="entry name" value="NA-bd_OB-fold"/>
</dbReference>
<dbReference type="InterPro" id="IPR000266">
    <property type="entry name" value="Ribosomal_uS17"/>
</dbReference>
<dbReference type="InterPro" id="IPR019984">
    <property type="entry name" value="Ribosomal_uS17_bact/chlr"/>
</dbReference>
<dbReference type="InterPro" id="IPR019979">
    <property type="entry name" value="Ribosomal_uS17_CS"/>
</dbReference>
<dbReference type="NCBIfam" id="NF004123">
    <property type="entry name" value="PRK05610.1"/>
    <property type="match status" value="1"/>
</dbReference>
<dbReference type="NCBIfam" id="TIGR03635">
    <property type="entry name" value="uS17_bact"/>
    <property type="match status" value="1"/>
</dbReference>
<dbReference type="PANTHER" id="PTHR10744">
    <property type="entry name" value="40S RIBOSOMAL PROTEIN S11 FAMILY MEMBER"/>
    <property type="match status" value="1"/>
</dbReference>
<dbReference type="PANTHER" id="PTHR10744:SF1">
    <property type="entry name" value="SMALL RIBOSOMAL SUBUNIT PROTEIN US17M"/>
    <property type="match status" value="1"/>
</dbReference>
<dbReference type="Pfam" id="PF00366">
    <property type="entry name" value="Ribosomal_S17"/>
    <property type="match status" value="1"/>
</dbReference>
<dbReference type="PRINTS" id="PR00973">
    <property type="entry name" value="RIBOSOMALS17"/>
</dbReference>
<dbReference type="SUPFAM" id="SSF50249">
    <property type="entry name" value="Nucleic acid-binding proteins"/>
    <property type="match status" value="1"/>
</dbReference>
<dbReference type="PROSITE" id="PS00056">
    <property type="entry name" value="RIBOSOMAL_S17"/>
    <property type="match status" value="1"/>
</dbReference>
<proteinExistence type="inferred from homology"/>
<gene>
    <name evidence="1" type="primary">rpsQ</name>
    <name type="ordered locus">GK0115</name>
</gene>
<organism>
    <name type="scientific">Geobacillus kaustophilus (strain HTA426)</name>
    <dbReference type="NCBI Taxonomy" id="235909"/>
    <lineage>
        <taxon>Bacteria</taxon>
        <taxon>Bacillati</taxon>
        <taxon>Bacillota</taxon>
        <taxon>Bacilli</taxon>
        <taxon>Bacillales</taxon>
        <taxon>Anoxybacillaceae</taxon>
        <taxon>Geobacillus</taxon>
        <taxon>Geobacillus thermoleovorans group</taxon>
    </lineage>
</organism>
<feature type="chain" id="PRO_0000233480" description="Small ribosomal subunit protein uS17">
    <location>
        <begin position="1"/>
        <end position="87"/>
    </location>
</feature>
<evidence type="ECO:0000255" key="1">
    <source>
        <dbReference type="HAMAP-Rule" id="MF_01345"/>
    </source>
</evidence>
<evidence type="ECO:0000305" key="2"/>